<keyword id="KW-0963">Cytoplasm</keyword>
<keyword id="KW-0489">Methyltransferase</keyword>
<keyword id="KW-0698">rRNA processing</keyword>
<keyword id="KW-0949">S-adenosyl-L-methionine</keyword>
<keyword id="KW-0808">Transferase</keyword>
<evidence type="ECO:0000255" key="1">
    <source>
        <dbReference type="HAMAP-Rule" id="MF_00658"/>
    </source>
</evidence>
<protein>
    <recommendedName>
        <fullName evidence="1">Ribosomal RNA large subunit methyltransferase H</fullName>
        <ecNumber evidence="1">2.1.1.177</ecNumber>
    </recommendedName>
    <alternativeName>
        <fullName evidence="1">23S rRNA (pseudouridine1915-N3)-methyltransferase</fullName>
    </alternativeName>
    <alternativeName>
        <fullName evidence="1">23S rRNA m3Psi1915 methyltransferase</fullName>
    </alternativeName>
    <alternativeName>
        <fullName evidence="1">rRNA (pseudouridine-N3-)-methyltransferase RlmH</fullName>
    </alternativeName>
</protein>
<comment type="function">
    <text evidence="1">Specifically methylates the pseudouridine at position 1915 (m3Psi1915) in 23S rRNA.</text>
</comment>
<comment type="catalytic activity">
    <reaction evidence="1">
        <text>pseudouridine(1915) in 23S rRNA + S-adenosyl-L-methionine = N(3)-methylpseudouridine(1915) in 23S rRNA + S-adenosyl-L-homocysteine + H(+)</text>
        <dbReference type="Rhea" id="RHEA:42752"/>
        <dbReference type="Rhea" id="RHEA-COMP:10221"/>
        <dbReference type="Rhea" id="RHEA-COMP:10222"/>
        <dbReference type="ChEBI" id="CHEBI:15378"/>
        <dbReference type="ChEBI" id="CHEBI:57856"/>
        <dbReference type="ChEBI" id="CHEBI:59789"/>
        <dbReference type="ChEBI" id="CHEBI:65314"/>
        <dbReference type="ChEBI" id="CHEBI:74486"/>
        <dbReference type="EC" id="2.1.1.177"/>
    </reaction>
</comment>
<comment type="subunit">
    <text evidence="1">Homodimer.</text>
</comment>
<comment type="subcellular location">
    <subcellularLocation>
        <location evidence="1">Cytoplasm</location>
    </subcellularLocation>
</comment>
<comment type="similarity">
    <text evidence="1">Belongs to the RNA methyltransferase RlmH family.</text>
</comment>
<reference key="1">
    <citation type="journal article" date="2009" name="J. Bacteriol.">
        <title>The genome of Burkholderia cenocepacia J2315, an epidemic pathogen of cystic fibrosis patients.</title>
        <authorList>
            <person name="Holden M.T."/>
            <person name="Seth-Smith H.M."/>
            <person name="Crossman L.C."/>
            <person name="Sebaihia M."/>
            <person name="Bentley S.D."/>
            <person name="Cerdeno-Tarraga A.M."/>
            <person name="Thomson N.R."/>
            <person name="Bason N."/>
            <person name="Quail M.A."/>
            <person name="Sharp S."/>
            <person name="Cherevach I."/>
            <person name="Churcher C."/>
            <person name="Goodhead I."/>
            <person name="Hauser H."/>
            <person name="Holroyd N."/>
            <person name="Mungall K."/>
            <person name="Scott P."/>
            <person name="Walker D."/>
            <person name="White B."/>
            <person name="Rose H."/>
            <person name="Iversen P."/>
            <person name="Mil-Homens D."/>
            <person name="Rocha E.P."/>
            <person name="Fialho A.M."/>
            <person name="Baldwin A."/>
            <person name="Dowson C."/>
            <person name="Barrell B.G."/>
            <person name="Govan J.R."/>
            <person name="Vandamme P."/>
            <person name="Hart C.A."/>
            <person name="Mahenthiralingam E."/>
            <person name="Parkhill J."/>
        </authorList>
    </citation>
    <scope>NUCLEOTIDE SEQUENCE [LARGE SCALE GENOMIC DNA]</scope>
    <source>
        <strain>ATCC BAA-245 / DSM 16553 / LMG 16656 / NCTC 13227 / J2315 / CF5610</strain>
    </source>
</reference>
<dbReference type="EC" id="2.1.1.177" evidence="1"/>
<dbReference type="EMBL" id="AM747720">
    <property type="protein sequence ID" value="CAR52694.1"/>
    <property type="molecule type" value="Genomic_DNA"/>
</dbReference>
<dbReference type="RefSeq" id="WP_006484265.1">
    <property type="nucleotide sequence ID" value="NC_011000.1"/>
</dbReference>
<dbReference type="SMR" id="B4E5S1"/>
<dbReference type="GeneID" id="62011776"/>
<dbReference type="KEGG" id="bcj:BCAL2393"/>
<dbReference type="eggNOG" id="COG1576">
    <property type="taxonomic scope" value="Bacteria"/>
</dbReference>
<dbReference type="HOGENOM" id="CLU_100552_1_0_4"/>
<dbReference type="BioCyc" id="BCEN216591:G1G1V-2640-MONOMER"/>
<dbReference type="Proteomes" id="UP000001035">
    <property type="component" value="Chromosome 1"/>
</dbReference>
<dbReference type="GO" id="GO:0005737">
    <property type="term" value="C:cytoplasm"/>
    <property type="evidence" value="ECO:0007669"/>
    <property type="project" value="UniProtKB-SubCell"/>
</dbReference>
<dbReference type="GO" id="GO:0070038">
    <property type="term" value="F:rRNA (pseudouridine-N3-)-methyltransferase activity"/>
    <property type="evidence" value="ECO:0007669"/>
    <property type="project" value="UniProtKB-UniRule"/>
</dbReference>
<dbReference type="CDD" id="cd18081">
    <property type="entry name" value="RlmH-like"/>
    <property type="match status" value="1"/>
</dbReference>
<dbReference type="Gene3D" id="3.40.1280.10">
    <property type="match status" value="1"/>
</dbReference>
<dbReference type="HAMAP" id="MF_00658">
    <property type="entry name" value="23SrRNA_methyltr_H"/>
    <property type="match status" value="1"/>
</dbReference>
<dbReference type="InterPro" id="IPR029028">
    <property type="entry name" value="Alpha/beta_knot_MTases"/>
</dbReference>
<dbReference type="InterPro" id="IPR003742">
    <property type="entry name" value="RlmH-like"/>
</dbReference>
<dbReference type="InterPro" id="IPR029026">
    <property type="entry name" value="tRNA_m1G_MTases_N"/>
</dbReference>
<dbReference type="NCBIfam" id="NF000986">
    <property type="entry name" value="PRK00103.1-4"/>
    <property type="match status" value="1"/>
</dbReference>
<dbReference type="NCBIfam" id="TIGR00246">
    <property type="entry name" value="tRNA_RlmH_YbeA"/>
    <property type="match status" value="1"/>
</dbReference>
<dbReference type="PANTHER" id="PTHR33603">
    <property type="entry name" value="METHYLTRANSFERASE"/>
    <property type="match status" value="1"/>
</dbReference>
<dbReference type="PANTHER" id="PTHR33603:SF1">
    <property type="entry name" value="RIBOSOMAL RNA LARGE SUBUNIT METHYLTRANSFERASE H"/>
    <property type="match status" value="1"/>
</dbReference>
<dbReference type="Pfam" id="PF02590">
    <property type="entry name" value="SPOUT_MTase"/>
    <property type="match status" value="1"/>
</dbReference>
<dbReference type="PIRSF" id="PIRSF004505">
    <property type="entry name" value="MT_bac"/>
    <property type="match status" value="1"/>
</dbReference>
<dbReference type="SUPFAM" id="SSF75217">
    <property type="entry name" value="alpha/beta knot"/>
    <property type="match status" value="1"/>
</dbReference>
<sequence length="156" mass="17498">MKLFILAVGHKMPGWIASGFDEYTKRMPPELRIELREIKPELRSGGRSAESVMAAERQKIEAALPKGARLVALDERGRDWTTMQLAQALPGWQQDGRDVAFVIGGADGLDPELKARADVLLRISSMTLPHGMVRVLLAEQLYRAWSITQNHPYHRA</sequence>
<proteinExistence type="inferred from homology"/>
<feature type="chain" id="PRO_0000366571" description="Ribosomal RNA large subunit methyltransferase H">
    <location>
        <begin position="1"/>
        <end position="156"/>
    </location>
</feature>
<feature type="binding site" evidence="1">
    <location>
        <position position="73"/>
    </location>
    <ligand>
        <name>S-adenosyl-L-methionine</name>
        <dbReference type="ChEBI" id="CHEBI:59789"/>
    </ligand>
</feature>
<feature type="binding site" evidence="1">
    <location>
        <position position="104"/>
    </location>
    <ligand>
        <name>S-adenosyl-L-methionine</name>
        <dbReference type="ChEBI" id="CHEBI:59789"/>
    </ligand>
</feature>
<feature type="binding site" evidence="1">
    <location>
        <begin position="123"/>
        <end position="128"/>
    </location>
    <ligand>
        <name>S-adenosyl-L-methionine</name>
        <dbReference type="ChEBI" id="CHEBI:59789"/>
    </ligand>
</feature>
<accession>B4E5S1</accession>
<gene>
    <name evidence="1" type="primary">rlmH</name>
    <name type="ordered locus">BceJ2315_23530</name>
    <name type="ORF">BCAL2393</name>
</gene>
<name>RLMH_BURCJ</name>
<organism>
    <name type="scientific">Burkholderia cenocepacia (strain ATCC BAA-245 / DSM 16553 / LMG 16656 / NCTC 13227 / J2315 / CF5610)</name>
    <name type="common">Burkholderia cepacia (strain J2315)</name>
    <dbReference type="NCBI Taxonomy" id="216591"/>
    <lineage>
        <taxon>Bacteria</taxon>
        <taxon>Pseudomonadati</taxon>
        <taxon>Pseudomonadota</taxon>
        <taxon>Betaproteobacteria</taxon>
        <taxon>Burkholderiales</taxon>
        <taxon>Burkholderiaceae</taxon>
        <taxon>Burkholderia</taxon>
        <taxon>Burkholderia cepacia complex</taxon>
    </lineage>
</organism>